<dbReference type="EMBL" id="BA000016">
    <property type="protein sequence ID" value="BAB82102.1"/>
    <property type="molecule type" value="Genomic_DNA"/>
</dbReference>
<dbReference type="RefSeq" id="WP_003454312.1">
    <property type="nucleotide sequence ID" value="NC_003366.1"/>
</dbReference>
<dbReference type="SMR" id="Q8XHT2"/>
<dbReference type="STRING" id="195102.gene:10491713"/>
<dbReference type="GeneID" id="93001018"/>
<dbReference type="KEGG" id="cpe:CPE2396"/>
<dbReference type="HOGENOM" id="CLU_073626_1_0_9"/>
<dbReference type="Proteomes" id="UP000000818">
    <property type="component" value="Chromosome"/>
</dbReference>
<dbReference type="GO" id="GO:0022627">
    <property type="term" value="C:cytosolic small ribosomal subunit"/>
    <property type="evidence" value="ECO:0007669"/>
    <property type="project" value="TreeGrafter"/>
</dbReference>
<dbReference type="GO" id="GO:0019843">
    <property type="term" value="F:rRNA binding"/>
    <property type="evidence" value="ECO:0007669"/>
    <property type="project" value="UniProtKB-UniRule"/>
</dbReference>
<dbReference type="GO" id="GO:0003735">
    <property type="term" value="F:structural constituent of ribosome"/>
    <property type="evidence" value="ECO:0007669"/>
    <property type="project" value="InterPro"/>
</dbReference>
<dbReference type="GO" id="GO:0006412">
    <property type="term" value="P:translation"/>
    <property type="evidence" value="ECO:0007669"/>
    <property type="project" value="UniProtKB-UniRule"/>
</dbReference>
<dbReference type="CDD" id="cd00364">
    <property type="entry name" value="Ribosomal_uS17"/>
    <property type="match status" value="1"/>
</dbReference>
<dbReference type="FunFam" id="2.40.50.140:FF:000026">
    <property type="entry name" value="30S ribosomal protein S17"/>
    <property type="match status" value="1"/>
</dbReference>
<dbReference type="Gene3D" id="2.40.50.140">
    <property type="entry name" value="Nucleic acid-binding proteins"/>
    <property type="match status" value="1"/>
</dbReference>
<dbReference type="HAMAP" id="MF_01345_B">
    <property type="entry name" value="Ribosomal_uS17_B"/>
    <property type="match status" value="1"/>
</dbReference>
<dbReference type="InterPro" id="IPR012340">
    <property type="entry name" value="NA-bd_OB-fold"/>
</dbReference>
<dbReference type="InterPro" id="IPR000266">
    <property type="entry name" value="Ribosomal_uS17"/>
</dbReference>
<dbReference type="InterPro" id="IPR019984">
    <property type="entry name" value="Ribosomal_uS17_bact/chlr"/>
</dbReference>
<dbReference type="InterPro" id="IPR019979">
    <property type="entry name" value="Ribosomal_uS17_CS"/>
</dbReference>
<dbReference type="NCBIfam" id="NF004123">
    <property type="entry name" value="PRK05610.1"/>
    <property type="match status" value="1"/>
</dbReference>
<dbReference type="NCBIfam" id="TIGR03635">
    <property type="entry name" value="uS17_bact"/>
    <property type="match status" value="1"/>
</dbReference>
<dbReference type="PANTHER" id="PTHR10744">
    <property type="entry name" value="40S RIBOSOMAL PROTEIN S11 FAMILY MEMBER"/>
    <property type="match status" value="1"/>
</dbReference>
<dbReference type="PANTHER" id="PTHR10744:SF1">
    <property type="entry name" value="SMALL RIBOSOMAL SUBUNIT PROTEIN US17M"/>
    <property type="match status" value="1"/>
</dbReference>
<dbReference type="Pfam" id="PF00366">
    <property type="entry name" value="Ribosomal_S17"/>
    <property type="match status" value="1"/>
</dbReference>
<dbReference type="PRINTS" id="PR00973">
    <property type="entry name" value="RIBOSOMALS17"/>
</dbReference>
<dbReference type="SUPFAM" id="SSF50249">
    <property type="entry name" value="Nucleic acid-binding proteins"/>
    <property type="match status" value="1"/>
</dbReference>
<dbReference type="PROSITE" id="PS00056">
    <property type="entry name" value="RIBOSOMAL_S17"/>
    <property type="match status" value="1"/>
</dbReference>
<feature type="chain" id="PRO_0000233461" description="Small ribosomal subunit protein uS17">
    <location>
        <begin position="1"/>
        <end position="84"/>
    </location>
</feature>
<organism>
    <name type="scientific">Clostridium perfringens (strain 13 / Type A)</name>
    <dbReference type="NCBI Taxonomy" id="195102"/>
    <lineage>
        <taxon>Bacteria</taxon>
        <taxon>Bacillati</taxon>
        <taxon>Bacillota</taxon>
        <taxon>Clostridia</taxon>
        <taxon>Eubacteriales</taxon>
        <taxon>Clostridiaceae</taxon>
        <taxon>Clostridium</taxon>
    </lineage>
</organism>
<evidence type="ECO:0000255" key="1">
    <source>
        <dbReference type="HAMAP-Rule" id="MF_01345"/>
    </source>
</evidence>
<evidence type="ECO:0000305" key="2"/>
<protein>
    <recommendedName>
        <fullName evidence="1">Small ribosomal subunit protein uS17</fullName>
    </recommendedName>
    <alternativeName>
        <fullName evidence="2">30S ribosomal protein S17</fullName>
    </alternativeName>
</protein>
<sequence length="84" mass="9962">MERNLRKKRLGRVVSDKMDKTIVVAVETKVRHPLYGKTVNRTTKFKAHDENNEARFGDRVLIMETRPLSKDKRWRLVEIVEKAK</sequence>
<keyword id="KW-1185">Reference proteome</keyword>
<keyword id="KW-0687">Ribonucleoprotein</keyword>
<keyword id="KW-0689">Ribosomal protein</keyword>
<keyword id="KW-0694">RNA-binding</keyword>
<keyword id="KW-0699">rRNA-binding</keyword>
<name>RS17_CLOPE</name>
<reference key="1">
    <citation type="journal article" date="2002" name="Proc. Natl. Acad. Sci. U.S.A.">
        <title>Complete genome sequence of Clostridium perfringens, an anaerobic flesh-eater.</title>
        <authorList>
            <person name="Shimizu T."/>
            <person name="Ohtani K."/>
            <person name="Hirakawa H."/>
            <person name="Ohshima K."/>
            <person name="Yamashita A."/>
            <person name="Shiba T."/>
            <person name="Ogasawara N."/>
            <person name="Hattori M."/>
            <person name="Kuhara S."/>
            <person name="Hayashi H."/>
        </authorList>
    </citation>
    <scope>NUCLEOTIDE SEQUENCE [LARGE SCALE GENOMIC DNA]</scope>
    <source>
        <strain>13 / Type A</strain>
    </source>
</reference>
<gene>
    <name evidence="1" type="primary">rpsQ</name>
    <name type="ordered locus">CPE2396</name>
</gene>
<proteinExistence type="inferred from homology"/>
<accession>Q8XHT2</accession>
<comment type="function">
    <text evidence="1">One of the primary rRNA binding proteins, it binds specifically to the 5'-end of 16S ribosomal RNA.</text>
</comment>
<comment type="subunit">
    <text evidence="1">Part of the 30S ribosomal subunit.</text>
</comment>
<comment type="similarity">
    <text evidence="1">Belongs to the universal ribosomal protein uS17 family.</text>
</comment>